<protein>
    <recommendedName>
        <fullName evidence="1">Queuine tRNA-ribosyltransferase</fullName>
        <ecNumber evidence="1">2.4.2.29</ecNumber>
    </recommendedName>
    <alternativeName>
        <fullName evidence="1">Guanine insertion enzyme</fullName>
    </alternativeName>
    <alternativeName>
        <fullName evidence="1">tRNA-guanine transglycosylase</fullName>
    </alternativeName>
</protein>
<accession>Q4UVX2</accession>
<organism>
    <name type="scientific">Xanthomonas campestris pv. campestris (strain 8004)</name>
    <dbReference type="NCBI Taxonomy" id="314565"/>
    <lineage>
        <taxon>Bacteria</taxon>
        <taxon>Pseudomonadati</taxon>
        <taxon>Pseudomonadota</taxon>
        <taxon>Gammaproteobacteria</taxon>
        <taxon>Lysobacterales</taxon>
        <taxon>Lysobacteraceae</taxon>
        <taxon>Xanthomonas</taxon>
    </lineage>
</organism>
<keyword id="KW-0328">Glycosyltransferase</keyword>
<keyword id="KW-0479">Metal-binding</keyword>
<keyword id="KW-0671">Queuosine biosynthesis</keyword>
<keyword id="KW-0808">Transferase</keyword>
<keyword id="KW-0819">tRNA processing</keyword>
<keyword id="KW-0862">Zinc</keyword>
<sequence length="381" mass="42138">MSRLQFQLQTTDGHARRGRLTFPRGTVETPAFMPVGTYGSVKGILPEQIRALGAEIILGNTFHLYLRPGLDVIGDHGGLHGFARWDGPILTDSGGFQVFSLAHRRKITEQGVTFSSPNDGARVFLGPEESMQIQKVLDSDIVMIFDECTPYPATEDVARRSMELSLRWAQRSRQAHDGLGNDAALFGIVQGGVHPDLRSRSLDGLQAIGFDGYAIGGLAVGEPEHERNAMLEHLHPRLPAERPRYLMGVGRPEDLVEGVARGVDMFDCVMPTRNARNGHYFTSFGTVRIRNAKYERDLDTIEPGCGCHACSSGYTRAYLRHLDRCNEMLAPMLGTLHNLWYYEKLMADMRAAIAAGTFVEFRRSFYAARGATTPPLPGESS</sequence>
<gene>
    <name evidence="1" type="primary">tgt</name>
    <name type="ordered locus">XC_1736</name>
</gene>
<dbReference type="EC" id="2.4.2.29" evidence="1"/>
<dbReference type="EMBL" id="CP000050">
    <property type="protein sequence ID" value="AAY48801.1"/>
    <property type="molecule type" value="Genomic_DNA"/>
</dbReference>
<dbReference type="RefSeq" id="WP_011037520.1">
    <property type="nucleotide sequence ID" value="NZ_CP155948.1"/>
</dbReference>
<dbReference type="SMR" id="Q4UVX2"/>
<dbReference type="KEGG" id="xcb:XC_1736"/>
<dbReference type="HOGENOM" id="CLU_022060_0_1_6"/>
<dbReference type="UniPathway" id="UPA00392"/>
<dbReference type="Proteomes" id="UP000000420">
    <property type="component" value="Chromosome"/>
</dbReference>
<dbReference type="GO" id="GO:0005829">
    <property type="term" value="C:cytosol"/>
    <property type="evidence" value="ECO:0007669"/>
    <property type="project" value="TreeGrafter"/>
</dbReference>
<dbReference type="GO" id="GO:0046872">
    <property type="term" value="F:metal ion binding"/>
    <property type="evidence" value="ECO:0007669"/>
    <property type="project" value="UniProtKB-KW"/>
</dbReference>
<dbReference type="GO" id="GO:0008479">
    <property type="term" value="F:tRNA-guanosine(34) queuine transglycosylase activity"/>
    <property type="evidence" value="ECO:0007669"/>
    <property type="project" value="UniProtKB-UniRule"/>
</dbReference>
<dbReference type="GO" id="GO:0008616">
    <property type="term" value="P:queuosine biosynthetic process"/>
    <property type="evidence" value="ECO:0007669"/>
    <property type="project" value="UniProtKB-UniRule"/>
</dbReference>
<dbReference type="GO" id="GO:0002099">
    <property type="term" value="P:tRNA wobble guanine modification"/>
    <property type="evidence" value="ECO:0007669"/>
    <property type="project" value="TreeGrafter"/>
</dbReference>
<dbReference type="GO" id="GO:0101030">
    <property type="term" value="P:tRNA-guanine transglycosylation"/>
    <property type="evidence" value="ECO:0007669"/>
    <property type="project" value="InterPro"/>
</dbReference>
<dbReference type="FunFam" id="3.20.20.105:FF:000001">
    <property type="entry name" value="Queuine tRNA-ribosyltransferase"/>
    <property type="match status" value="1"/>
</dbReference>
<dbReference type="Gene3D" id="3.20.20.105">
    <property type="entry name" value="Queuine tRNA-ribosyltransferase-like"/>
    <property type="match status" value="1"/>
</dbReference>
<dbReference type="HAMAP" id="MF_00168">
    <property type="entry name" value="Q_tRNA_Tgt"/>
    <property type="match status" value="1"/>
</dbReference>
<dbReference type="InterPro" id="IPR050076">
    <property type="entry name" value="ArchSynthase1/Queuine_TRR"/>
</dbReference>
<dbReference type="InterPro" id="IPR004803">
    <property type="entry name" value="TGT"/>
</dbReference>
<dbReference type="InterPro" id="IPR036511">
    <property type="entry name" value="TGT-like_sf"/>
</dbReference>
<dbReference type="InterPro" id="IPR002616">
    <property type="entry name" value="tRNA_ribo_trans-like"/>
</dbReference>
<dbReference type="NCBIfam" id="TIGR00430">
    <property type="entry name" value="Q_tRNA_tgt"/>
    <property type="match status" value="1"/>
</dbReference>
<dbReference type="NCBIfam" id="TIGR00449">
    <property type="entry name" value="tgt_general"/>
    <property type="match status" value="1"/>
</dbReference>
<dbReference type="PANTHER" id="PTHR46499">
    <property type="entry name" value="QUEUINE TRNA-RIBOSYLTRANSFERASE"/>
    <property type="match status" value="1"/>
</dbReference>
<dbReference type="PANTHER" id="PTHR46499:SF1">
    <property type="entry name" value="QUEUINE TRNA-RIBOSYLTRANSFERASE"/>
    <property type="match status" value="1"/>
</dbReference>
<dbReference type="Pfam" id="PF01702">
    <property type="entry name" value="TGT"/>
    <property type="match status" value="1"/>
</dbReference>
<dbReference type="SUPFAM" id="SSF51713">
    <property type="entry name" value="tRNA-guanine transglycosylase"/>
    <property type="match status" value="1"/>
</dbReference>
<comment type="function">
    <text evidence="1">Catalyzes the base-exchange of a guanine (G) residue with the queuine precursor 7-aminomethyl-7-deazaguanine (PreQ1) at position 34 (anticodon wobble position) in tRNAs with GU(N) anticodons (tRNA-Asp, -Asn, -His and -Tyr). Catalysis occurs through a double-displacement mechanism. The nucleophile active site attacks the C1' of nucleotide 34 to detach the guanine base from the RNA, forming a covalent enzyme-RNA intermediate. The proton acceptor active site deprotonates the incoming PreQ1, allowing a nucleophilic attack on the C1' of the ribose to form the product. After dissociation, two additional enzymatic reactions on the tRNA convert PreQ1 to queuine (Q), resulting in the hypermodified nucleoside queuosine (7-(((4,5-cis-dihydroxy-2-cyclopenten-1-yl)amino)methyl)-7-deazaguanosine).</text>
</comment>
<comment type="catalytic activity">
    <reaction evidence="1">
        <text>7-aminomethyl-7-carbaguanine + guanosine(34) in tRNA = 7-aminomethyl-7-carbaguanosine(34) in tRNA + guanine</text>
        <dbReference type="Rhea" id="RHEA:24104"/>
        <dbReference type="Rhea" id="RHEA-COMP:10341"/>
        <dbReference type="Rhea" id="RHEA-COMP:10342"/>
        <dbReference type="ChEBI" id="CHEBI:16235"/>
        <dbReference type="ChEBI" id="CHEBI:58703"/>
        <dbReference type="ChEBI" id="CHEBI:74269"/>
        <dbReference type="ChEBI" id="CHEBI:82833"/>
        <dbReference type="EC" id="2.4.2.29"/>
    </reaction>
</comment>
<comment type="cofactor">
    <cofactor evidence="1">
        <name>Zn(2+)</name>
        <dbReference type="ChEBI" id="CHEBI:29105"/>
    </cofactor>
    <text evidence="1">Binds 1 zinc ion per subunit.</text>
</comment>
<comment type="pathway">
    <text evidence="1">tRNA modification; tRNA-queuosine biosynthesis.</text>
</comment>
<comment type="subunit">
    <text evidence="1">Homodimer. Within each dimer, one monomer is responsible for RNA recognition and catalysis, while the other monomer binds to the replacement base PreQ1.</text>
</comment>
<comment type="similarity">
    <text evidence="1">Belongs to the queuine tRNA-ribosyltransferase family.</text>
</comment>
<proteinExistence type="inferred from homology"/>
<feature type="chain" id="PRO_1000016889" description="Queuine tRNA-ribosyltransferase">
    <location>
        <begin position="1"/>
        <end position="381"/>
    </location>
</feature>
<feature type="region of interest" description="RNA binding" evidence="1">
    <location>
        <begin position="248"/>
        <end position="254"/>
    </location>
</feature>
<feature type="region of interest" description="RNA binding; important for wobble base 34 recognition" evidence="1">
    <location>
        <begin position="272"/>
        <end position="276"/>
    </location>
</feature>
<feature type="active site" description="Proton acceptor" evidence="1">
    <location>
        <position position="92"/>
    </location>
</feature>
<feature type="active site" description="Nucleophile" evidence="1">
    <location>
        <position position="267"/>
    </location>
</feature>
<feature type="binding site" evidence="1">
    <location>
        <begin position="92"/>
        <end position="96"/>
    </location>
    <ligand>
        <name>substrate</name>
    </ligand>
</feature>
<feature type="binding site" evidence="1">
    <location>
        <position position="146"/>
    </location>
    <ligand>
        <name>substrate</name>
    </ligand>
</feature>
<feature type="binding site" evidence="1">
    <location>
        <position position="190"/>
    </location>
    <ligand>
        <name>substrate</name>
    </ligand>
</feature>
<feature type="binding site" evidence="1">
    <location>
        <position position="217"/>
    </location>
    <ligand>
        <name>substrate</name>
    </ligand>
</feature>
<feature type="binding site" evidence="1">
    <location>
        <position position="305"/>
    </location>
    <ligand>
        <name>Zn(2+)</name>
        <dbReference type="ChEBI" id="CHEBI:29105"/>
    </ligand>
</feature>
<feature type="binding site" evidence="1">
    <location>
        <position position="307"/>
    </location>
    <ligand>
        <name>Zn(2+)</name>
        <dbReference type="ChEBI" id="CHEBI:29105"/>
    </ligand>
</feature>
<feature type="binding site" evidence="1">
    <location>
        <position position="310"/>
    </location>
    <ligand>
        <name>Zn(2+)</name>
        <dbReference type="ChEBI" id="CHEBI:29105"/>
    </ligand>
</feature>
<feature type="binding site" evidence="1">
    <location>
        <position position="337"/>
    </location>
    <ligand>
        <name>Zn(2+)</name>
        <dbReference type="ChEBI" id="CHEBI:29105"/>
    </ligand>
</feature>
<reference key="1">
    <citation type="journal article" date="2005" name="Genome Res.">
        <title>Comparative and functional genomic analyses of the pathogenicity of phytopathogen Xanthomonas campestris pv. campestris.</title>
        <authorList>
            <person name="Qian W."/>
            <person name="Jia Y."/>
            <person name="Ren S.-X."/>
            <person name="He Y.-Q."/>
            <person name="Feng J.-X."/>
            <person name="Lu L.-F."/>
            <person name="Sun Q."/>
            <person name="Ying G."/>
            <person name="Tang D.-J."/>
            <person name="Tang H."/>
            <person name="Wu W."/>
            <person name="Hao P."/>
            <person name="Wang L."/>
            <person name="Jiang B.-L."/>
            <person name="Zeng S."/>
            <person name="Gu W.-Y."/>
            <person name="Lu G."/>
            <person name="Rong L."/>
            <person name="Tian Y."/>
            <person name="Yao Z."/>
            <person name="Fu G."/>
            <person name="Chen B."/>
            <person name="Fang R."/>
            <person name="Qiang B."/>
            <person name="Chen Z."/>
            <person name="Zhao G.-P."/>
            <person name="Tang J.-L."/>
            <person name="He C."/>
        </authorList>
    </citation>
    <scope>NUCLEOTIDE SEQUENCE [LARGE SCALE GENOMIC DNA]</scope>
    <source>
        <strain>8004</strain>
    </source>
</reference>
<name>TGT_XANC8</name>
<evidence type="ECO:0000255" key="1">
    <source>
        <dbReference type="HAMAP-Rule" id="MF_00168"/>
    </source>
</evidence>